<name>SPSS2_METBU</name>
<keyword id="KW-0648">Protein biosynthesis</keyword>
<keyword id="KW-0663">Pyridoxal phosphate</keyword>
<keyword id="KW-0808">Transferase</keyword>
<dbReference type="EC" id="2.5.1.73" evidence="1"/>
<dbReference type="EMBL" id="CP000300">
    <property type="protein sequence ID" value="ABE52350.1"/>
    <property type="molecule type" value="Genomic_DNA"/>
</dbReference>
<dbReference type="RefSeq" id="WP_011499495.1">
    <property type="nucleotide sequence ID" value="NC_007955.1"/>
</dbReference>
<dbReference type="SMR" id="Q12W26"/>
<dbReference type="STRING" id="259564.Mbur_1440"/>
<dbReference type="GeneID" id="3998468"/>
<dbReference type="KEGG" id="mbu:Mbur_1440"/>
<dbReference type="HOGENOM" id="CLU_060476_0_0_2"/>
<dbReference type="OrthoDB" id="5817at2157"/>
<dbReference type="BRENDA" id="2.5.1.73">
    <property type="organism ID" value="9200"/>
</dbReference>
<dbReference type="Proteomes" id="UP000001979">
    <property type="component" value="Chromosome"/>
</dbReference>
<dbReference type="GO" id="GO:0043766">
    <property type="term" value="F:Sep-tRNA:Cys-tRNA synthase activity"/>
    <property type="evidence" value="ECO:0007669"/>
    <property type="project" value="UniProtKB-UniRule"/>
</dbReference>
<dbReference type="GO" id="GO:0006412">
    <property type="term" value="P:translation"/>
    <property type="evidence" value="ECO:0007669"/>
    <property type="project" value="UniProtKB-KW"/>
</dbReference>
<dbReference type="Gene3D" id="3.90.1150.10">
    <property type="entry name" value="Aspartate Aminotransferase, domain 1"/>
    <property type="match status" value="1"/>
</dbReference>
<dbReference type="Gene3D" id="3.40.640.10">
    <property type="entry name" value="Type I PLP-dependent aspartate aminotransferase-like (Major domain)"/>
    <property type="match status" value="1"/>
</dbReference>
<dbReference type="HAMAP" id="MF_01675">
    <property type="entry name" value="Sep_Cys_tRNA_synth"/>
    <property type="match status" value="1"/>
</dbReference>
<dbReference type="InterPro" id="IPR015424">
    <property type="entry name" value="PyrdxlP-dep_Trfase"/>
</dbReference>
<dbReference type="InterPro" id="IPR015421">
    <property type="entry name" value="PyrdxlP-dep_Trfase_major"/>
</dbReference>
<dbReference type="InterPro" id="IPR015422">
    <property type="entry name" value="PyrdxlP-dep_Trfase_small"/>
</dbReference>
<dbReference type="InterPro" id="IPR013375">
    <property type="entry name" value="Sep_Cys-tRNA_synth_arc"/>
</dbReference>
<dbReference type="InterPro" id="IPR008829">
    <property type="entry name" value="SepSecS/SepCysS"/>
</dbReference>
<dbReference type="NCBIfam" id="NF006810">
    <property type="entry name" value="PRK09331.1"/>
    <property type="match status" value="1"/>
</dbReference>
<dbReference type="NCBIfam" id="TIGR02539">
    <property type="entry name" value="SepCysS"/>
    <property type="match status" value="1"/>
</dbReference>
<dbReference type="PANTHER" id="PTHR43586">
    <property type="entry name" value="CYSTEINE DESULFURASE"/>
    <property type="match status" value="1"/>
</dbReference>
<dbReference type="PANTHER" id="PTHR43586:SF3">
    <property type="entry name" value="O-PHOSPHO-L-SERYL-TRNA:CYS-TRNA SYNTHASE"/>
    <property type="match status" value="1"/>
</dbReference>
<dbReference type="Pfam" id="PF05889">
    <property type="entry name" value="SepSecS"/>
    <property type="match status" value="1"/>
</dbReference>
<dbReference type="SUPFAM" id="SSF53383">
    <property type="entry name" value="PLP-dependent transferases"/>
    <property type="match status" value="1"/>
</dbReference>
<evidence type="ECO:0000255" key="1">
    <source>
        <dbReference type="HAMAP-Rule" id="MF_01675"/>
    </source>
</evidence>
<feature type="chain" id="PRO_0000359446" description="O-phospho-L-seryl-tRNA:Cys-tRNA synthase 2">
    <location>
        <begin position="1"/>
        <end position="387"/>
    </location>
</feature>
<feature type="binding site" evidence="1">
    <location>
        <begin position="89"/>
        <end position="90"/>
    </location>
    <ligand>
        <name>pyridoxal 5'-phosphate</name>
        <dbReference type="ChEBI" id="CHEBI:597326"/>
    </ligand>
</feature>
<feature type="binding site" evidence="1">
    <location>
        <position position="196"/>
    </location>
    <ligand>
        <name>pyridoxal 5'-phosphate</name>
        <dbReference type="ChEBI" id="CHEBI:597326"/>
    </ligand>
</feature>
<feature type="binding site" evidence="1">
    <location>
        <begin position="219"/>
        <end position="221"/>
    </location>
    <ligand>
        <name>pyridoxal 5'-phosphate</name>
        <dbReference type="ChEBI" id="CHEBI:597326"/>
    </ligand>
</feature>
<feature type="modified residue" description="N6-(pyridoxal phosphate)lysine" evidence="1">
    <location>
        <position position="222"/>
    </location>
</feature>
<organism>
    <name type="scientific">Methanococcoides burtonii (strain DSM 6242 / NBRC 107633 / OCM 468 / ACE-M)</name>
    <dbReference type="NCBI Taxonomy" id="259564"/>
    <lineage>
        <taxon>Archaea</taxon>
        <taxon>Methanobacteriati</taxon>
        <taxon>Methanobacteriota</taxon>
        <taxon>Stenosarchaea group</taxon>
        <taxon>Methanomicrobia</taxon>
        <taxon>Methanosarcinales</taxon>
        <taxon>Methanosarcinaceae</taxon>
        <taxon>Methanococcoides</taxon>
    </lineage>
</organism>
<gene>
    <name type="ordered locus">Mbur_1440</name>
</gene>
<protein>
    <recommendedName>
        <fullName evidence="1">O-phospho-L-seryl-tRNA:Cys-tRNA synthase 2</fullName>
        <ecNumber evidence="1">2.5.1.73</ecNumber>
    </recommendedName>
    <alternativeName>
        <fullName evidence="1">Sep-tRNA:Cys-tRNA synthase 2</fullName>
        <shortName evidence="1">SepCysS 2</shortName>
    </alternativeName>
</protein>
<comment type="function">
    <text evidence="1">Converts O-phospho-L-seryl-tRNA(Cys) (Sep-tRNA(Cys)) to L-cysteinyl-tRNA(Cys) (Cys-tRNA(Cys)).</text>
</comment>
<comment type="catalytic activity">
    <reaction evidence="1">
        <text>O-phospho-L-seryl-tRNA(Cys) + hydrogen sulfide + H(+) = L-cysteinyl-tRNA(Cys) + phosphate</text>
        <dbReference type="Rhea" id="RHEA:25686"/>
        <dbReference type="Rhea" id="RHEA-COMP:9679"/>
        <dbReference type="Rhea" id="RHEA-COMP:9719"/>
        <dbReference type="ChEBI" id="CHEBI:15378"/>
        <dbReference type="ChEBI" id="CHEBI:29919"/>
        <dbReference type="ChEBI" id="CHEBI:43474"/>
        <dbReference type="ChEBI" id="CHEBI:78517"/>
        <dbReference type="ChEBI" id="CHEBI:78551"/>
        <dbReference type="EC" id="2.5.1.73"/>
    </reaction>
</comment>
<comment type="cofactor">
    <cofactor evidence="1">
        <name>pyridoxal 5'-phosphate</name>
        <dbReference type="ChEBI" id="CHEBI:597326"/>
    </cofactor>
</comment>
<comment type="subunit">
    <text evidence="1">Homodimer. Interacts with SepRS.</text>
</comment>
<comment type="similarity">
    <text evidence="1">Belongs to the SepCysS family.</text>
</comment>
<reference key="1">
    <citation type="journal article" date="2009" name="ISME J.">
        <title>The genome sequence of the psychrophilic archaeon, Methanococcoides burtonii: the role of genome evolution in cold adaptation.</title>
        <authorList>
            <person name="Allen M.A."/>
            <person name="Lauro F.M."/>
            <person name="Williams T.J."/>
            <person name="Burg D."/>
            <person name="Siddiqui K.S."/>
            <person name="De Francisci D."/>
            <person name="Chong K.W."/>
            <person name="Pilak O."/>
            <person name="Chew H.H."/>
            <person name="De Maere M.Z."/>
            <person name="Ting L."/>
            <person name="Katrib M."/>
            <person name="Ng C."/>
            <person name="Sowers K.R."/>
            <person name="Galperin M.Y."/>
            <person name="Anderson I.J."/>
            <person name="Ivanova N."/>
            <person name="Dalin E."/>
            <person name="Martinez M."/>
            <person name="Lapidus A."/>
            <person name="Hauser L."/>
            <person name="Land M."/>
            <person name="Thomas T."/>
            <person name="Cavicchioli R."/>
        </authorList>
    </citation>
    <scope>NUCLEOTIDE SEQUENCE [LARGE SCALE GENOMIC DNA]</scope>
    <source>
        <strain>DSM 6242 / NBRC 107633 / OCM 468 / ACE-M</strain>
    </source>
</reference>
<sequence length="387" mass="42984">MTLDDAALKSFGFIERPTKNMINIDPLQTGGILTEDARRALVEWGDGYSICDNCGGVLDLIKKPPVQKFIHEALPEFLGVDEVRITHGARESKFAVMHAIAQEGDTVILDGLAHYSSVVAAQRARLEIRKVPHSEKPDYHIDPEAYGTAIEETISETGKAPALALLTYPDGNYGNLADAKKIASVCHEYDVPLLLNCAYSVGRMPVDAKELGVDFIAGSGHKSMASCGPIGVLGVNNDNGDYSDIIFRKSPTNKNKEIELLGCTARSATLMTMIASFPEVVKRTRNWGNEVADARWFSEKLETMGLIQMGQKPHNHDLMFFEAPNLYEISTRVKKGRYFLYKELKSRNIHGIKAGLTKFFKLSTFEVGRENLSYIVDSFDEIIKKYE</sequence>
<accession>Q12W26</accession>
<proteinExistence type="inferred from homology"/>